<dbReference type="EMBL" id="CP000964">
    <property type="protein sequence ID" value="ACI11495.1"/>
    <property type="molecule type" value="Genomic_DNA"/>
</dbReference>
<dbReference type="KEGG" id="kpe:KPK_3307"/>
<dbReference type="HOGENOM" id="CLU_125889_0_0_6"/>
<dbReference type="BioCyc" id="KPNE507522:GI0B-3291-MONOMER"/>
<dbReference type="Proteomes" id="UP000001734">
    <property type="component" value="Chromosome"/>
</dbReference>
<dbReference type="GO" id="GO:0005886">
    <property type="term" value="C:plasma membrane"/>
    <property type="evidence" value="ECO:0007669"/>
    <property type="project" value="UniProtKB-SubCell"/>
</dbReference>
<dbReference type="HAMAP" id="MF_01874">
    <property type="entry name" value="UPF0756"/>
    <property type="match status" value="1"/>
</dbReference>
<dbReference type="InterPro" id="IPR007382">
    <property type="entry name" value="UPF0756_TM"/>
</dbReference>
<dbReference type="PANTHER" id="PTHR38452">
    <property type="entry name" value="UPF0756 MEMBRANE PROTEIN YEAL"/>
    <property type="match status" value="1"/>
</dbReference>
<dbReference type="PANTHER" id="PTHR38452:SF1">
    <property type="entry name" value="UPF0756 MEMBRANE PROTEIN YEAL"/>
    <property type="match status" value="1"/>
</dbReference>
<dbReference type="Pfam" id="PF04284">
    <property type="entry name" value="DUF441"/>
    <property type="match status" value="1"/>
</dbReference>
<feature type="chain" id="PRO_0000388889" description="UPF0756 membrane protein KPK_3307">
    <location>
        <begin position="1"/>
        <end position="148"/>
    </location>
</feature>
<feature type="transmembrane region" description="Helical" evidence="1">
    <location>
        <begin position="14"/>
        <end position="34"/>
    </location>
</feature>
<feature type="transmembrane region" description="Helical" evidence="1">
    <location>
        <begin position="51"/>
        <end position="71"/>
    </location>
</feature>
<feature type="transmembrane region" description="Helical" evidence="1">
    <location>
        <begin position="86"/>
        <end position="106"/>
    </location>
</feature>
<feature type="transmembrane region" description="Helical" evidence="1">
    <location>
        <begin position="121"/>
        <end position="141"/>
    </location>
</feature>
<keyword id="KW-1003">Cell membrane</keyword>
<keyword id="KW-0472">Membrane</keyword>
<keyword id="KW-0812">Transmembrane</keyword>
<keyword id="KW-1133">Transmembrane helix</keyword>
<comment type="subcellular location">
    <subcellularLocation>
        <location evidence="1">Cell membrane</location>
        <topology evidence="1">Multi-pass membrane protein</topology>
    </subcellularLocation>
</comment>
<comment type="similarity">
    <text evidence="1">Belongs to the UPF0756 family.</text>
</comment>
<evidence type="ECO:0000255" key="1">
    <source>
        <dbReference type="HAMAP-Rule" id="MF_01874"/>
    </source>
</evidence>
<organism>
    <name type="scientific">Klebsiella pneumoniae (strain 342)</name>
    <dbReference type="NCBI Taxonomy" id="507522"/>
    <lineage>
        <taxon>Bacteria</taxon>
        <taxon>Pseudomonadati</taxon>
        <taxon>Pseudomonadota</taxon>
        <taxon>Gammaproteobacteria</taxon>
        <taxon>Enterobacterales</taxon>
        <taxon>Enterobacteriaceae</taxon>
        <taxon>Klebsiella/Raoultella group</taxon>
        <taxon>Klebsiella</taxon>
        <taxon>Klebsiella pneumoniae complex</taxon>
    </lineage>
</organism>
<proteinExistence type="inferred from homology"/>
<protein>
    <recommendedName>
        <fullName evidence="1">UPF0756 membrane protein KPK_3307</fullName>
    </recommendedName>
</protein>
<name>Y3307_KLEP3</name>
<reference key="1">
    <citation type="journal article" date="2008" name="PLoS Genet.">
        <title>Complete genome sequence of the N2-fixing broad host range endophyte Klebsiella pneumoniae 342 and virulence predictions verified in mice.</title>
        <authorList>
            <person name="Fouts D.E."/>
            <person name="Tyler H.L."/>
            <person name="DeBoy R.T."/>
            <person name="Daugherty S."/>
            <person name="Ren Q."/>
            <person name="Badger J.H."/>
            <person name="Durkin A.S."/>
            <person name="Huot H."/>
            <person name="Shrivastava S."/>
            <person name="Kothari S."/>
            <person name="Dodson R.J."/>
            <person name="Mohamoud Y."/>
            <person name="Khouri H."/>
            <person name="Roesch L.F.W."/>
            <person name="Krogfelt K.A."/>
            <person name="Struve C."/>
            <person name="Triplett E.W."/>
            <person name="Methe B.A."/>
        </authorList>
    </citation>
    <scope>NUCLEOTIDE SEQUENCE [LARGE SCALE GENOMIC DNA]</scope>
    <source>
        <strain>342</strain>
    </source>
</reference>
<sequence>MFDTTLLILLGLAALGFISHNTTVAISILVLIIVRVTPLNTFFPWIEKQGLTVGIIILTIGVMAPIASGTLPPSTLIHSFMNWKSLLAIAVGVFVSWLGGRGVSLMGTQPHLVAGLLVGTVLGVALFRGVPVGPLIAAGIISLFIGKS</sequence>
<accession>B5XSD1</accession>
<gene>
    <name type="ordered locus">KPK_3307</name>
</gene>